<gene>
    <name evidence="1" type="primary">bamA</name>
    <name type="synonym">yaeT</name>
    <name type="ordered locus">ETA_08980</name>
</gene>
<reference key="1">
    <citation type="journal article" date="2008" name="Environ. Microbiol.">
        <title>The genome of Erwinia tasmaniensis strain Et1/99, a non-pathogenic bacterium in the genus Erwinia.</title>
        <authorList>
            <person name="Kube M."/>
            <person name="Migdoll A.M."/>
            <person name="Mueller I."/>
            <person name="Kuhl H."/>
            <person name="Beck A."/>
            <person name="Reinhardt R."/>
            <person name="Geider K."/>
        </authorList>
    </citation>
    <scope>NUCLEOTIDE SEQUENCE [LARGE SCALE GENOMIC DNA]</scope>
    <source>
        <strain>DSM 17950 / CFBP 7177 / CIP 109463 / NCPPB 4357 / Et1/99</strain>
    </source>
</reference>
<feature type="signal peptide" evidence="1">
    <location>
        <begin position="1"/>
        <end position="20"/>
    </location>
</feature>
<feature type="chain" id="PRO_1000145778" description="Outer membrane protein assembly factor BamA">
    <location>
        <begin position="21"/>
        <end position="803"/>
    </location>
</feature>
<feature type="domain" description="POTRA 1" evidence="2">
    <location>
        <begin position="24"/>
        <end position="91"/>
    </location>
</feature>
<feature type="domain" description="POTRA 2" evidence="2">
    <location>
        <begin position="92"/>
        <end position="172"/>
    </location>
</feature>
<feature type="domain" description="POTRA 3" evidence="2">
    <location>
        <begin position="175"/>
        <end position="263"/>
    </location>
</feature>
<feature type="domain" description="POTRA 4" evidence="2">
    <location>
        <begin position="266"/>
        <end position="344"/>
    </location>
</feature>
<feature type="domain" description="POTRA 5" evidence="2">
    <location>
        <begin position="347"/>
        <end position="421"/>
    </location>
</feature>
<protein>
    <recommendedName>
        <fullName evidence="1">Outer membrane protein assembly factor BamA</fullName>
    </recommendedName>
</protein>
<accession>B2VE18</accession>
<evidence type="ECO:0000255" key="1">
    <source>
        <dbReference type="HAMAP-Rule" id="MF_01430"/>
    </source>
</evidence>
<evidence type="ECO:0000255" key="2">
    <source>
        <dbReference type="PROSITE-ProRule" id="PRU01115"/>
    </source>
</evidence>
<organism>
    <name type="scientific">Erwinia tasmaniensis (strain DSM 17950 / CFBP 7177 / CIP 109463 / NCPPB 4357 / Et1/99)</name>
    <dbReference type="NCBI Taxonomy" id="465817"/>
    <lineage>
        <taxon>Bacteria</taxon>
        <taxon>Pseudomonadati</taxon>
        <taxon>Pseudomonadota</taxon>
        <taxon>Gammaproteobacteria</taxon>
        <taxon>Enterobacterales</taxon>
        <taxon>Erwiniaceae</taxon>
        <taxon>Erwinia</taxon>
    </lineage>
</organism>
<proteinExistence type="inferred from homology"/>
<keyword id="KW-0998">Cell outer membrane</keyword>
<keyword id="KW-0472">Membrane</keyword>
<keyword id="KW-1185">Reference proteome</keyword>
<keyword id="KW-0677">Repeat</keyword>
<keyword id="KW-0732">Signal</keyword>
<keyword id="KW-0812">Transmembrane</keyword>
<keyword id="KW-1134">Transmembrane beta strand</keyword>
<comment type="function">
    <text evidence="1">Part of the outer membrane protein assembly complex, which is involved in assembly and insertion of beta-barrel proteins into the outer membrane. Constitutes, with BamD, the core component of the assembly machinery.</text>
</comment>
<comment type="subunit">
    <text evidence="1">Part of the Bam complex, which is composed of the outer membrane protein BamA, and four lipoproteins BamB, BamC, BamD and BamE.</text>
</comment>
<comment type="subcellular location">
    <subcellularLocation>
        <location evidence="1">Cell outer membrane</location>
    </subcellularLocation>
</comment>
<comment type="similarity">
    <text evidence="1">Belongs to the BamA family.</text>
</comment>
<dbReference type="EMBL" id="CU468135">
    <property type="protein sequence ID" value="CAO95944.1"/>
    <property type="molecule type" value="Genomic_DNA"/>
</dbReference>
<dbReference type="RefSeq" id="WP_012440646.1">
    <property type="nucleotide sequence ID" value="NC_010694.1"/>
</dbReference>
<dbReference type="SMR" id="B2VE18"/>
<dbReference type="STRING" id="465817.ETA_08980"/>
<dbReference type="KEGG" id="eta:ETA_08980"/>
<dbReference type="eggNOG" id="COG4775">
    <property type="taxonomic scope" value="Bacteria"/>
</dbReference>
<dbReference type="HOGENOM" id="CLU_007664_1_0_6"/>
<dbReference type="OrthoDB" id="9803054at2"/>
<dbReference type="Proteomes" id="UP000001726">
    <property type="component" value="Chromosome"/>
</dbReference>
<dbReference type="GO" id="GO:1990063">
    <property type="term" value="C:Bam protein complex"/>
    <property type="evidence" value="ECO:0007669"/>
    <property type="project" value="TreeGrafter"/>
</dbReference>
<dbReference type="GO" id="GO:0043165">
    <property type="term" value="P:Gram-negative-bacterium-type cell outer membrane assembly"/>
    <property type="evidence" value="ECO:0007669"/>
    <property type="project" value="UniProtKB-UniRule"/>
</dbReference>
<dbReference type="GO" id="GO:0051205">
    <property type="term" value="P:protein insertion into membrane"/>
    <property type="evidence" value="ECO:0007669"/>
    <property type="project" value="UniProtKB-UniRule"/>
</dbReference>
<dbReference type="FunFam" id="2.40.160.50:FF:000001">
    <property type="entry name" value="Outer membrane protein assembly factor BamA"/>
    <property type="match status" value="1"/>
</dbReference>
<dbReference type="FunFam" id="3.10.20.310:FF:000001">
    <property type="entry name" value="Outer membrane protein assembly factor BamA"/>
    <property type="match status" value="1"/>
</dbReference>
<dbReference type="FunFam" id="3.10.20.310:FF:000002">
    <property type="entry name" value="Outer membrane protein assembly factor BamA"/>
    <property type="match status" value="1"/>
</dbReference>
<dbReference type="FunFam" id="3.10.20.310:FF:000003">
    <property type="entry name" value="Outer membrane protein assembly factor BamA"/>
    <property type="match status" value="1"/>
</dbReference>
<dbReference type="FunFam" id="3.10.20.310:FF:000004">
    <property type="entry name" value="Outer membrane protein assembly factor BamA"/>
    <property type="match status" value="1"/>
</dbReference>
<dbReference type="FunFam" id="3.10.20.310:FF:000005">
    <property type="entry name" value="Outer membrane protein assembly factor BamA"/>
    <property type="match status" value="1"/>
</dbReference>
<dbReference type="Gene3D" id="3.10.20.310">
    <property type="entry name" value="membrane protein fhac"/>
    <property type="match status" value="5"/>
</dbReference>
<dbReference type="Gene3D" id="2.40.160.50">
    <property type="entry name" value="membrane protein fhac: a member of the omp85/tpsb transporter family"/>
    <property type="match status" value="1"/>
</dbReference>
<dbReference type="HAMAP" id="MF_01430">
    <property type="entry name" value="OM_assembly_BamA"/>
    <property type="match status" value="1"/>
</dbReference>
<dbReference type="InterPro" id="IPR000184">
    <property type="entry name" value="Bac_surfAg_D15"/>
</dbReference>
<dbReference type="InterPro" id="IPR010827">
    <property type="entry name" value="BamA/TamA_POTRA"/>
</dbReference>
<dbReference type="InterPro" id="IPR039910">
    <property type="entry name" value="D15-like"/>
</dbReference>
<dbReference type="InterPro" id="IPR023707">
    <property type="entry name" value="OM_assembly_BamA"/>
</dbReference>
<dbReference type="InterPro" id="IPR034746">
    <property type="entry name" value="POTRA"/>
</dbReference>
<dbReference type="NCBIfam" id="TIGR03303">
    <property type="entry name" value="OM_YaeT"/>
    <property type="match status" value="1"/>
</dbReference>
<dbReference type="NCBIfam" id="NF008287">
    <property type="entry name" value="PRK11067.1"/>
    <property type="match status" value="1"/>
</dbReference>
<dbReference type="PANTHER" id="PTHR12815:SF23">
    <property type="entry name" value="OUTER MEMBRANE PROTEIN ASSEMBLY FACTOR BAMA"/>
    <property type="match status" value="1"/>
</dbReference>
<dbReference type="PANTHER" id="PTHR12815">
    <property type="entry name" value="SORTING AND ASSEMBLY MACHINERY SAMM50 PROTEIN FAMILY MEMBER"/>
    <property type="match status" value="1"/>
</dbReference>
<dbReference type="Pfam" id="PF01103">
    <property type="entry name" value="Omp85"/>
    <property type="match status" value="1"/>
</dbReference>
<dbReference type="Pfam" id="PF07244">
    <property type="entry name" value="POTRA"/>
    <property type="match status" value="4"/>
</dbReference>
<dbReference type="PIRSF" id="PIRSF006076">
    <property type="entry name" value="OM_assembly_OMP85"/>
    <property type="match status" value="1"/>
</dbReference>
<dbReference type="PROSITE" id="PS51779">
    <property type="entry name" value="POTRA"/>
    <property type="match status" value="5"/>
</dbReference>
<name>BAMA_ERWT9</name>
<sequence>MAMKKLLIASLLLSSATVYGADGFVVKDIHFDGLQRVAVGAALLSMPVRVGDTVSDEDLSNTIRALFATGNFEDVQVLRDGNTLIVQVKERPTIASITFSGNKAVKEDMLKQNLEASGVRVGEALDRTTVSTIEKGLEDFYYSVGKYSASVKAVVTPLPRNRVDLKLVFTEGVSAKIQQINVVGNKAFSSDELISRFQLRDDVPWWNVVGDRKYQKQKLAGDLETLRSFYLDRGYARFNIDSTQVSLTPDKKGIYITVNITEGEQYKLSGVAVSGNLAGHSAEIEGLSKVKPGELYNGAKVTRTEDDIKKLLGRYGYAYPRVQTQTEIDDANKTVKLHINVDAGNRYYVRKVRFEGNDTSKDAVLRREMRQMEGAWLGSDLVEQGKDRLNRIGYFETVDTDTVRVPGSADQVDVVYKVKERNTGTLNFGVGYGTESGVSFQAGITQENWLGTGNTVGISGTKNDYQTYAEFSLTDPYFTVDGVSLGGRLFYNNFKADDADLSDYTNKSYGLDGTLGFPVNENNTLRVGLGYVHNSLSNMQPQVAMWRYLRSVGMNPSLSSNEDFSTDDFTFNYGWTYNTLDRGFFPTAGNRTNLNGKVTIPGSDNAFYKATLDTQQYVPLDQDHSWVLLGRGRVGYADGLSGKELPFYENFYAGGSSTVRGFRSNTIGPKAAYYNNGSSNCSGSDVAKICSSDDAVGGNAMAVASAELITPTPFLSEKYANSVRTSLFVDAGTVWDTHWDDTAATLGAGVPDYSKPGNIRMSAGLALQWMSPLGPLVFSYAQPFKKYDGDKAEQFQFNIGKTW</sequence>